<keyword id="KW-0963">Cytoplasm</keyword>
<keyword id="KW-0460">Magnesium</keyword>
<keyword id="KW-0479">Metal-binding</keyword>
<keyword id="KW-0566">Pantothenate biosynthesis</keyword>
<keyword id="KW-1185">Reference proteome</keyword>
<keyword id="KW-0808">Transferase</keyword>
<organism>
    <name type="scientific">Geotalea daltonii (strain DSM 22248 / JCM 15807 / FRC-32)</name>
    <name type="common">Geobacter daltonii</name>
    <dbReference type="NCBI Taxonomy" id="316067"/>
    <lineage>
        <taxon>Bacteria</taxon>
        <taxon>Pseudomonadati</taxon>
        <taxon>Thermodesulfobacteriota</taxon>
        <taxon>Desulfuromonadia</taxon>
        <taxon>Geobacterales</taxon>
        <taxon>Geobacteraceae</taxon>
        <taxon>Geotalea</taxon>
    </lineage>
</organism>
<accession>B9M2A3</accession>
<feature type="chain" id="PRO_1000123383" description="3-methyl-2-oxobutanoate hydroxymethyltransferase">
    <location>
        <begin position="1"/>
        <end position="267"/>
    </location>
</feature>
<feature type="active site" description="Proton acceptor" evidence="1">
    <location>
        <position position="184"/>
    </location>
</feature>
<feature type="binding site" evidence="1">
    <location>
        <begin position="46"/>
        <end position="47"/>
    </location>
    <ligand>
        <name>3-methyl-2-oxobutanoate</name>
        <dbReference type="ChEBI" id="CHEBI:11851"/>
    </ligand>
</feature>
<feature type="binding site" evidence="1">
    <location>
        <position position="46"/>
    </location>
    <ligand>
        <name>Mg(2+)</name>
        <dbReference type="ChEBI" id="CHEBI:18420"/>
    </ligand>
</feature>
<feature type="binding site" evidence="1">
    <location>
        <position position="85"/>
    </location>
    <ligand>
        <name>3-methyl-2-oxobutanoate</name>
        <dbReference type="ChEBI" id="CHEBI:11851"/>
    </ligand>
</feature>
<feature type="binding site" evidence="1">
    <location>
        <position position="85"/>
    </location>
    <ligand>
        <name>Mg(2+)</name>
        <dbReference type="ChEBI" id="CHEBI:18420"/>
    </ligand>
</feature>
<feature type="binding site" evidence="1">
    <location>
        <position position="115"/>
    </location>
    <ligand>
        <name>3-methyl-2-oxobutanoate</name>
        <dbReference type="ChEBI" id="CHEBI:11851"/>
    </ligand>
</feature>
<feature type="binding site" evidence="1">
    <location>
        <position position="117"/>
    </location>
    <ligand>
        <name>Mg(2+)</name>
        <dbReference type="ChEBI" id="CHEBI:18420"/>
    </ligand>
</feature>
<name>PANB_GEODF</name>
<dbReference type="EC" id="2.1.2.11" evidence="1"/>
<dbReference type="EMBL" id="CP001390">
    <property type="protein sequence ID" value="ACM21221.1"/>
    <property type="molecule type" value="Genomic_DNA"/>
</dbReference>
<dbReference type="RefSeq" id="WP_012647949.1">
    <property type="nucleotide sequence ID" value="NC_011979.1"/>
</dbReference>
<dbReference type="SMR" id="B9M2A3"/>
<dbReference type="STRING" id="316067.Geob_2877"/>
<dbReference type="KEGG" id="geo:Geob_2877"/>
<dbReference type="eggNOG" id="COG0413">
    <property type="taxonomic scope" value="Bacteria"/>
</dbReference>
<dbReference type="HOGENOM" id="CLU_036645_1_0_7"/>
<dbReference type="OrthoDB" id="9781789at2"/>
<dbReference type="UniPathway" id="UPA00028">
    <property type="reaction ID" value="UER00003"/>
</dbReference>
<dbReference type="Proteomes" id="UP000007721">
    <property type="component" value="Chromosome"/>
</dbReference>
<dbReference type="GO" id="GO:0005737">
    <property type="term" value="C:cytoplasm"/>
    <property type="evidence" value="ECO:0007669"/>
    <property type="project" value="UniProtKB-SubCell"/>
</dbReference>
<dbReference type="GO" id="GO:0003864">
    <property type="term" value="F:3-methyl-2-oxobutanoate hydroxymethyltransferase activity"/>
    <property type="evidence" value="ECO:0007669"/>
    <property type="project" value="UniProtKB-UniRule"/>
</dbReference>
<dbReference type="GO" id="GO:0000287">
    <property type="term" value="F:magnesium ion binding"/>
    <property type="evidence" value="ECO:0007669"/>
    <property type="project" value="TreeGrafter"/>
</dbReference>
<dbReference type="GO" id="GO:0015940">
    <property type="term" value="P:pantothenate biosynthetic process"/>
    <property type="evidence" value="ECO:0007669"/>
    <property type="project" value="UniProtKB-UniRule"/>
</dbReference>
<dbReference type="CDD" id="cd06557">
    <property type="entry name" value="KPHMT-like"/>
    <property type="match status" value="1"/>
</dbReference>
<dbReference type="FunFam" id="3.20.20.60:FF:000003">
    <property type="entry name" value="3-methyl-2-oxobutanoate hydroxymethyltransferase"/>
    <property type="match status" value="1"/>
</dbReference>
<dbReference type="Gene3D" id="3.20.20.60">
    <property type="entry name" value="Phosphoenolpyruvate-binding domains"/>
    <property type="match status" value="1"/>
</dbReference>
<dbReference type="HAMAP" id="MF_00156">
    <property type="entry name" value="PanB"/>
    <property type="match status" value="1"/>
</dbReference>
<dbReference type="InterPro" id="IPR003700">
    <property type="entry name" value="Pantoate_hydroxy_MeTrfase"/>
</dbReference>
<dbReference type="InterPro" id="IPR015813">
    <property type="entry name" value="Pyrv/PenolPyrv_kinase-like_dom"/>
</dbReference>
<dbReference type="InterPro" id="IPR040442">
    <property type="entry name" value="Pyrv_kinase-like_dom_sf"/>
</dbReference>
<dbReference type="NCBIfam" id="TIGR00222">
    <property type="entry name" value="panB"/>
    <property type="match status" value="1"/>
</dbReference>
<dbReference type="NCBIfam" id="NF001452">
    <property type="entry name" value="PRK00311.1"/>
    <property type="match status" value="1"/>
</dbReference>
<dbReference type="PANTHER" id="PTHR20881">
    <property type="entry name" value="3-METHYL-2-OXOBUTANOATE HYDROXYMETHYLTRANSFERASE"/>
    <property type="match status" value="1"/>
</dbReference>
<dbReference type="PANTHER" id="PTHR20881:SF0">
    <property type="entry name" value="3-METHYL-2-OXOBUTANOATE HYDROXYMETHYLTRANSFERASE"/>
    <property type="match status" value="1"/>
</dbReference>
<dbReference type="Pfam" id="PF02548">
    <property type="entry name" value="Pantoate_transf"/>
    <property type="match status" value="1"/>
</dbReference>
<dbReference type="PIRSF" id="PIRSF000388">
    <property type="entry name" value="Pantoate_hydroxy_MeTrfase"/>
    <property type="match status" value="1"/>
</dbReference>
<dbReference type="SUPFAM" id="SSF51621">
    <property type="entry name" value="Phosphoenolpyruvate/pyruvate domain"/>
    <property type="match status" value="1"/>
</dbReference>
<comment type="function">
    <text evidence="1">Catalyzes the reversible reaction in which hydroxymethyl group from 5,10-methylenetetrahydrofolate is transferred onto alpha-ketoisovalerate to form ketopantoate.</text>
</comment>
<comment type="catalytic activity">
    <reaction evidence="1">
        <text>3-methyl-2-oxobutanoate + (6R)-5,10-methylene-5,6,7,8-tetrahydrofolate + H2O = 2-dehydropantoate + (6S)-5,6,7,8-tetrahydrofolate</text>
        <dbReference type="Rhea" id="RHEA:11824"/>
        <dbReference type="ChEBI" id="CHEBI:11561"/>
        <dbReference type="ChEBI" id="CHEBI:11851"/>
        <dbReference type="ChEBI" id="CHEBI:15377"/>
        <dbReference type="ChEBI" id="CHEBI:15636"/>
        <dbReference type="ChEBI" id="CHEBI:57453"/>
        <dbReference type="EC" id="2.1.2.11"/>
    </reaction>
</comment>
<comment type="cofactor">
    <cofactor evidence="1">
        <name>Mg(2+)</name>
        <dbReference type="ChEBI" id="CHEBI:18420"/>
    </cofactor>
    <text evidence="1">Binds 1 Mg(2+) ion per subunit.</text>
</comment>
<comment type="pathway">
    <text evidence="1">Cofactor biosynthesis; (R)-pantothenate biosynthesis; (R)-pantoate from 3-methyl-2-oxobutanoate: step 1/2.</text>
</comment>
<comment type="subunit">
    <text evidence="1">Homodecamer; pentamer of dimers.</text>
</comment>
<comment type="subcellular location">
    <subcellularLocation>
        <location evidence="1">Cytoplasm</location>
    </subcellularLocation>
</comment>
<comment type="similarity">
    <text evidence="1">Belongs to the PanB family.</text>
</comment>
<sequence>MKKATTILDIQKMKAEGEKISMLTCYDYPTARIMDDCGIDMILIGDSVGVVYAGYDNTLPVTMEDMIYHTRAVVRAQPKALVVADMPFLSYQTDMVSARLNAGRLIKEGGAAAVKIEGGVNVAPVIEAITSMDIPVVAHIGLTPQSLHRMGGYRVQGRNNEQAEKLLADARAVESAGAFAVVLEGIPAALAARITSESGIPTIGIGAGPSCDGQVLVIHDILGLCEKYAPKFVKRYADLKPVIAQAISSYIQEVKEGAFPTEGNSFN</sequence>
<protein>
    <recommendedName>
        <fullName evidence="1">3-methyl-2-oxobutanoate hydroxymethyltransferase</fullName>
        <ecNumber evidence="1">2.1.2.11</ecNumber>
    </recommendedName>
    <alternativeName>
        <fullName evidence="1">Ketopantoate hydroxymethyltransferase</fullName>
        <shortName evidence="1">KPHMT</shortName>
    </alternativeName>
</protein>
<reference key="1">
    <citation type="submission" date="2009-01" db="EMBL/GenBank/DDBJ databases">
        <title>Complete sequence of Geobacter sp. FRC-32.</title>
        <authorList>
            <consortium name="US DOE Joint Genome Institute"/>
            <person name="Lucas S."/>
            <person name="Copeland A."/>
            <person name="Lapidus A."/>
            <person name="Glavina del Rio T."/>
            <person name="Dalin E."/>
            <person name="Tice H."/>
            <person name="Bruce D."/>
            <person name="Goodwin L."/>
            <person name="Pitluck S."/>
            <person name="Saunders E."/>
            <person name="Brettin T."/>
            <person name="Detter J.C."/>
            <person name="Han C."/>
            <person name="Larimer F."/>
            <person name="Land M."/>
            <person name="Hauser L."/>
            <person name="Kyrpides N."/>
            <person name="Ovchinnikova G."/>
            <person name="Kostka J."/>
            <person name="Richardson P."/>
        </authorList>
    </citation>
    <scope>NUCLEOTIDE SEQUENCE [LARGE SCALE GENOMIC DNA]</scope>
    <source>
        <strain>DSM 22248 / JCM 15807 / FRC-32</strain>
    </source>
</reference>
<proteinExistence type="inferred from homology"/>
<evidence type="ECO:0000255" key="1">
    <source>
        <dbReference type="HAMAP-Rule" id="MF_00156"/>
    </source>
</evidence>
<gene>
    <name evidence="1" type="primary">panB</name>
    <name type="ordered locus">Geob_2877</name>
</gene>